<organism>
    <name type="scientific">Shewanella woodyi (strain ATCC 51908 / MS32)</name>
    <dbReference type="NCBI Taxonomy" id="392500"/>
    <lineage>
        <taxon>Bacteria</taxon>
        <taxon>Pseudomonadati</taxon>
        <taxon>Pseudomonadota</taxon>
        <taxon>Gammaproteobacteria</taxon>
        <taxon>Alteromonadales</taxon>
        <taxon>Shewanellaceae</taxon>
        <taxon>Shewanella</taxon>
    </lineage>
</organism>
<name>GCSH_SHEWM</name>
<sequence length="129" mass="13943">MSNIPAELKYASSHEWIRKEEDGSYTVGISEHAQELLGDMVFVELPEVGDTLSAGEDCAVAESVKAASDIYAPLSGEVLAVNEALEDSPELVNSDAFGDGWFFRVMPSDVAEIDNLLDAEGYQAVIDEE</sequence>
<gene>
    <name evidence="1" type="primary">gcvH</name>
    <name type="ordered locus">Swoo_3968</name>
</gene>
<keyword id="KW-0450">Lipoyl</keyword>
<keyword id="KW-1185">Reference proteome</keyword>
<reference key="1">
    <citation type="submission" date="2008-02" db="EMBL/GenBank/DDBJ databases">
        <title>Complete sequence of Shewanella woodyi ATCC 51908.</title>
        <authorList>
            <consortium name="US DOE Joint Genome Institute"/>
            <person name="Copeland A."/>
            <person name="Lucas S."/>
            <person name="Lapidus A."/>
            <person name="Glavina del Rio T."/>
            <person name="Dalin E."/>
            <person name="Tice H."/>
            <person name="Bruce D."/>
            <person name="Goodwin L."/>
            <person name="Pitluck S."/>
            <person name="Sims D."/>
            <person name="Brettin T."/>
            <person name="Detter J.C."/>
            <person name="Han C."/>
            <person name="Kuske C.R."/>
            <person name="Schmutz J."/>
            <person name="Larimer F."/>
            <person name="Land M."/>
            <person name="Hauser L."/>
            <person name="Kyrpides N."/>
            <person name="Lykidis A."/>
            <person name="Zhao J.-S."/>
            <person name="Richardson P."/>
        </authorList>
    </citation>
    <scope>NUCLEOTIDE SEQUENCE [LARGE SCALE GENOMIC DNA]</scope>
    <source>
        <strain>ATCC 51908 / MS32</strain>
    </source>
</reference>
<evidence type="ECO:0000255" key="1">
    <source>
        <dbReference type="HAMAP-Rule" id="MF_00272"/>
    </source>
</evidence>
<evidence type="ECO:0000255" key="2">
    <source>
        <dbReference type="PROSITE-ProRule" id="PRU01066"/>
    </source>
</evidence>
<proteinExistence type="inferred from homology"/>
<accession>B1KG88</accession>
<feature type="chain" id="PRO_1000114551" description="Glycine cleavage system H protein">
    <location>
        <begin position="1"/>
        <end position="129"/>
    </location>
</feature>
<feature type="domain" description="Lipoyl-binding" evidence="2">
    <location>
        <begin position="24"/>
        <end position="106"/>
    </location>
</feature>
<feature type="modified residue" description="N6-lipoyllysine" evidence="1">
    <location>
        <position position="65"/>
    </location>
</feature>
<dbReference type="EMBL" id="CP000961">
    <property type="protein sequence ID" value="ACA88225.1"/>
    <property type="molecule type" value="Genomic_DNA"/>
</dbReference>
<dbReference type="RefSeq" id="WP_012326555.1">
    <property type="nucleotide sequence ID" value="NC_010506.1"/>
</dbReference>
<dbReference type="SMR" id="B1KG88"/>
<dbReference type="STRING" id="392500.Swoo_3968"/>
<dbReference type="KEGG" id="swd:Swoo_3968"/>
<dbReference type="eggNOG" id="COG0509">
    <property type="taxonomic scope" value="Bacteria"/>
</dbReference>
<dbReference type="HOGENOM" id="CLU_097408_2_1_6"/>
<dbReference type="Proteomes" id="UP000002168">
    <property type="component" value="Chromosome"/>
</dbReference>
<dbReference type="GO" id="GO:0005829">
    <property type="term" value="C:cytosol"/>
    <property type="evidence" value="ECO:0007669"/>
    <property type="project" value="TreeGrafter"/>
</dbReference>
<dbReference type="GO" id="GO:0005960">
    <property type="term" value="C:glycine cleavage complex"/>
    <property type="evidence" value="ECO:0007669"/>
    <property type="project" value="InterPro"/>
</dbReference>
<dbReference type="GO" id="GO:0019464">
    <property type="term" value="P:glycine decarboxylation via glycine cleavage system"/>
    <property type="evidence" value="ECO:0007669"/>
    <property type="project" value="UniProtKB-UniRule"/>
</dbReference>
<dbReference type="CDD" id="cd06848">
    <property type="entry name" value="GCS_H"/>
    <property type="match status" value="1"/>
</dbReference>
<dbReference type="FunFam" id="2.40.50.100:FF:000011">
    <property type="entry name" value="Glycine cleavage system H protein"/>
    <property type="match status" value="1"/>
</dbReference>
<dbReference type="Gene3D" id="2.40.50.100">
    <property type="match status" value="1"/>
</dbReference>
<dbReference type="HAMAP" id="MF_00272">
    <property type="entry name" value="GcvH"/>
    <property type="match status" value="1"/>
</dbReference>
<dbReference type="InterPro" id="IPR003016">
    <property type="entry name" value="2-oxoA_DH_lipoyl-BS"/>
</dbReference>
<dbReference type="InterPro" id="IPR000089">
    <property type="entry name" value="Biotin_lipoyl"/>
</dbReference>
<dbReference type="InterPro" id="IPR002930">
    <property type="entry name" value="GCV_H"/>
</dbReference>
<dbReference type="InterPro" id="IPR033753">
    <property type="entry name" value="GCV_H/Fam206"/>
</dbReference>
<dbReference type="InterPro" id="IPR017453">
    <property type="entry name" value="GCV_H_sub"/>
</dbReference>
<dbReference type="InterPro" id="IPR011053">
    <property type="entry name" value="Single_hybrid_motif"/>
</dbReference>
<dbReference type="NCBIfam" id="TIGR00527">
    <property type="entry name" value="gcvH"/>
    <property type="match status" value="1"/>
</dbReference>
<dbReference type="NCBIfam" id="NF002270">
    <property type="entry name" value="PRK01202.1"/>
    <property type="match status" value="1"/>
</dbReference>
<dbReference type="PANTHER" id="PTHR11715">
    <property type="entry name" value="GLYCINE CLEAVAGE SYSTEM H PROTEIN"/>
    <property type="match status" value="1"/>
</dbReference>
<dbReference type="PANTHER" id="PTHR11715:SF3">
    <property type="entry name" value="GLYCINE CLEAVAGE SYSTEM H PROTEIN-RELATED"/>
    <property type="match status" value="1"/>
</dbReference>
<dbReference type="Pfam" id="PF01597">
    <property type="entry name" value="GCV_H"/>
    <property type="match status" value="1"/>
</dbReference>
<dbReference type="SUPFAM" id="SSF51230">
    <property type="entry name" value="Single hybrid motif"/>
    <property type="match status" value="1"/>
</dbReference>
<dbReference type="PROSITE" id="PS50968">
    <property type="entry name" value="BIOTINYL_LIPOYL"/>
    <property type="match status" value="1"/>
</dbReference>
<dbReference type="PROSITE" id="PS00189">
    <property type="entry name" value="LIPOYL"/>
    <property type="match status" value="1"/>
</dbReference>
<comment type="function">
    <text evidence="1">The glycine cleavage system catalyzes the degradation of glycine. The H protein shuttles the methylamine group of glycine from the P protein to the T protein.</text>
</comment>
<comment type="cofactor">
    <cofactor evidence="1">
        <name>(R)-lipoate</name>
        <dbReference type="ChEBI" id="CHEBI:83088"/>
    </cofactor>
    <text evidence="1">Binds 1 lipoyl cofactor covalently.</text>
</comment>
<comment type="subunit">
    <text evidence="1">The glycine cleavage system is composed of four proteins: P, T, L and H.</text>
</comment>
<comment type="similarity">
    <text evidence="1">Belongs to the GcvH family.</text>
</comment>
<protein>
    <recommendedName>
        <fullName evidence="1">Glycine cleavage system H protein</fullName>
    </recommendedName>
</protein>